<keyword id="KW-0963">Cytoplasm</keyword>
<keyword id="KW-0671">Queuosine biosynthesis</keyword>
<keyword id="KW-1185">Reference proteome</keyword>
<keyword id="KW-0949">S-adenosyl-L-methionine</keyword>
<keyword id="KW-0808">Transferase</keyword>
<proteinExistence type="inferred from homology"/>
<protein>
    <recommendedName>
        <fullName evidence="1">S-adenosylmethionine:tRNA ribosyltransferase-isomerase</fullName>
        <ecNumber evidence="1">2.4.99.17</ecNumber>
    </recommendedName>
    <alternativeName>
        <fullName evidence="1">Queuosine biosynthesis protein QueA</fullName>
    </alternativeName>
</protein>
<comment type="function">
    <text evidence="1">Transfers and isomerizes the ribose moiety from AdoMet to the 7-aminomethyl group of 7-deazaguanine (preQ1-tRNA) to give epoxyqueuosine (oQ-tRNA).</text>
</comment>
<comment type="catalytic activity">
    <reaction evidence="1">
        <text>7-aminomethyl-7-carbaguanosine(34) in tRNA + S-adenosyl-L-methionine = epoxyqueuosine(34) in tRNA + adenine + L-methionine + 2 H(+)</text>
        <dbReference type="Rhea" id="RHEA:32155"/>
        <dbReference type="Rhea" id="RHEA-COMP:10342"/>
        <dbReference type="Rhea" id="RHEA-COMP:18582"/>
        <dbReference type="ChEBI" id="CHEBI:15378"/>
        <dbReference type="ChEBI" id="CHEBI:16708"/>
        <dbReference type="ChEBI" id="CHEBI:57844"/>
        <dbReference type="ChEBI" id="CHEBI:59789"/>
        <dbReference type="ChEBI" id="CHEBI:82833"/>
        <dbReference type="ChEBI" id="CHEBI:194443"/>
        <dbReference type="EC" id="2.4.99.17"/>
    </reaction>
</comment>
<comment type="pathway">
    <text evidence="1">tRNA modification; tRNA-queuosine biosynthesis.</text>
</comment>
<comment type="subunit">
    <text evidence="1">Monomer.</text>
</comment>
<comment type="subcellular location">
    <subcellularLocation>
        <location evidence="1">Cytoplasm</location>
    </subcellularLocation>
</comment>
<comment type="similarity">
    <text evidence="1">Belongs to the QueA family.</text>
</comment>
<name>QUEA_CLOK5</name>
<reference key="1">
    <citation type="journal article" date="2008" name="Proc. Natl. Acad. Sci. U.S.A.">
        <title>The genome of Clostridium kluyveri, a strict anaerobe with unique metabolic features.</title>
        <authorList>
            <person name="Seedorf H."/>
            <person name="Fricke W.F."/>
            <person name="Veith B."/>
            <person name="Brueggemann H."/>
            <person name="Liesegang H."/>
            <person name="Strittmatter A."/>
            <person name="Miethke M."/>
            <person name="Buckel W."/>
            <person name="Hinderberger J."/>
            <person name="Li F."/>
            <person name="Hagemeier C."/>
            <person name="Thauer R.K."/>
            <person name="Gottschalk G."/>
        </authorList>
    </citation>
    <scope>NUCLEOTIDE SEQUENCE [LARGE SCALE GENOMIC DNA]</scope>
    <source>
        <strain>ATCC 8527 / DSM 555 / NBRC 12016 / NCIMB 10680 / K1</strain>
    </source>
</reference>
<accession>A5N205</accession>
<dbReference type="EC" id="2.4.99.17" evidence="1"/>
<dbReference type="EMBL" id="CP000673">
    <property type="protein sequence ID" value="EDK35151.1"/>
    <property type="molecule type" value="Genomic_DNA"/>
</dbReference>
<dbReference type="RefSeq" id="WP_012103486.1">
    <property type="nucleotide sequence ID" value="NC_009706.1"/>
</dbReference>
<dbReference type="SMR" id="A5N205"/>
<dbReference type="STRING" id="431943.CKL_3143"/>
<dbReference type="KEGG" id="ckl:CKL_3143"/>
<dbReference type="eggNOG" id="COG0809">
    <property type="taxonomic scope" value="Bacteria"/>
</dbReference>
<dbReference type="HOGENOM" id="CLU_039110_1_0_9"/>
<dbReference type="UniPathway" id="UPA00392"/>
<dbReference type="Proteomes" id="UP000002411">
    <property type="component" value="Chromosome"/>
</dbReference>
<dbReference type="GO" id="GO:0005737">
    <property type="term" value="C:cytoplasm"/>
    <property type="evidence" value="ECO:0007669"/>
    <property type="project" value="UniProtKB-SubCell"/>
</dbReference>
<dbReference type="GO" id="GO:0051075">
    <property type="term" value="F:S-adenosylmethionine:tRNA ribosyltransferase-isomerase activity"/>
    <property type="evidence" value="ECO:0007669"/>
    <property type="project" value="UniProtKB-EC"/>
</dbReference>
<dbReference type="GO" id="GO:0008616">
    <property type="term" value="P:queuosine biosynthetic process"/>
    <property type="evidence" value="ECO:0007669"/>
    <property type="project" value="UniProtKB-UniRule"/>
</dbReference>
<dbReference type="GO" id="GO:0002099">
    <property type="term" value="P:tRNA wobble guanine modification"/>
    <property type="evidence" value="ECO:0007669"/>
    <property type="project" value="TreeGrafter"/>
</dbReference>
<dbReference type="FunFam" id="2.40.10.240:FF:000002">
    <property type="entry name" value="S-adenosylmethionine:tRNA ribosyltransferase-isomerase"/>
    <property type="match status" value="1"/>
</dbReference>
<dbReference type="FunFam" id="3.40.1780.10:FF:000001">
    <property type="entry name" value="S-adenosylmethionine:tRNA ribosyltransferase-isomerase"/>
    <property type="match status" value="1"/>
</dbReference>
<dbReference type="Gene3D" id="2.40.10.240">
    <property type="entry name" value="QueA-like"/>
    <property type="match status" value="1"/>
</dbReference>
<dbReference type="Gene3D" id="3.40.1780.10">
    <property type="entry name" value="QueA-like"/>
    <property type="match status" value="1"/>
</dbReference>
<dbReference type="HAMAP" id="MF_00113">
    <property type="entry name" value="QueA"/>
    <property type="match status" value="1"/>
</dbReference>
<dbReference type="InterPro" id="IPR003699">
    <property type="entry name" value="QueA"/>
</dbReference>
<dbReference type="InterPro" id="IPR042118">
    <property type="entry name" value="QueA_dom1"/>
</dbReference>
<dbReference type="InterPro" id="IPR042119">
    <property type="entry name" value="QueA_dom2"/>
</dbReference>
<dbReference type="InterPro" id="IPR036100">
    <property type="entry name" value="QueA_sf"/>
</dbReference>
<dbReference type="NCBIfam" id="NF001140">
    <property type="entry name" value="PRK00147.1"/>
    <property type="match status" value="1"/>
</dbReference>
<dbReference type="NCBIfam" id="TIGR00113">
    <property type="entry name" value="queA"/>
    <property type="match status" value="1"/>
</dbReference>
<dbReference type="PANTHER" id="PTHR30307">
    <property type="entry name" value="S-ADENOSYLMETHIONINE:TRNA RIBOSYLTRANSFERASE-ISOMERASE"/>
    <property type="match status" value="1"/>
</dbReference>
<dbReference type="PANTHER" id="PTHR30307:SF0">
    <property type="entry name" value="S-ADENOSYLMETHIONINE:TRNA RIBOSYLTRANSFERASE-ISOMERASE"/>
    <property type="match status" value="1"/>
</dbReference>
<dbReference type="Pfam" id="PF02547">
    <property type="entry name" value="Queuosine_synth"/>
    <property type="match status" value="1"/>
</dbReference>
<dbReference type="SUPFAM" id="SSF111337">
    <property type="entry name" value="QueA-like"/>
    <property type="match status" value="1"/>
</dbReference>
<feature type="chain" id="PRO_1000075997" description="S-adenosylmethionine:tRNA ribosyltransferase-isomerase">
    <location>
        <begin position="1"/>
        <end position="341"/>
    </location>
</feature>
<sequence>MEVTDFDFYLPEELIAQKPLEQRDEGRLMVLDKKTGKVCHKIFKDIVYYLNPGDCVVLNDTRVLPARLIGVREDTMGKIEFLLLKRRDNFTWETLVKPGRRAKVGNRFNFGSGQLKAEVVSINEDGNRIVRFEYNGVFEEILDKLGQIPLPPYIKEKLENKELYQTVYSKEEGSAAAPTAGLHFTEELLRELREKGVNLAFLTLHVGLGTFRPVKVENIEDHAMHSEFYSMSKETADMINAAKESGHSVISVGTTSCRTLETIGDENGRVKEQSGWTDIFIYPGYKYKVVDKLITNFHLPKSTLIMLVSAFYGRENTLHAYNVAVKEKYRFFSFGDAMFIK</sequence>
<organism>
    <name type="scientific">Clostridium kluyveri (strain ATCC 8527 / DSM 555 / NBRC 12016 / NCIMB 10680 / K1)</name>
    <dbReference type="NCBI Taxonomy" id="431943"/>
    <lineage>
        <taxon>Bacteria</taxon>
        <taxon>Bacillati</taxon>
        <taxon>Bacillota</taxon>
        <taxon>Clostridia</taxon>
        <taxon>Eubacteriales</taxon>
        <taxon>Clostridiaceae</taxon>
        <taxon>Clostridium</taxon>
    </lineage>
</organism>
<evidence type="ECO:0000255" key="1">
    <source>
        <dbReference type="HAMAP-Rule" id="MF_00113"/>
    </source>
</evidence>
<gene>
    <name evidence="1" type="primary">queA</name>
    <name type="ordered locus">CKL_3143</name>
</gene>